<protein>
    <recommendedName>
        <fullName evidence="1">Ferredoxin--NADP reductase</fullName>
        <shortName evidence="1">FNR</shortName>
        <shortName evidence="1">Fd-NADP(+) reductase</shortName>
        <ecNumber evidence="1">1.18.1.2</ecNumber>
    </recommendedName>
</protein>
<feature type="chain" id="PRO_0000364865" description="Ferredoxin--NADP reductase">
    <location>
        <begin position="1"/>
        <end position="321"/>
    </location>
</feature>
<feature type="binding site" evidence="1">
    <location>
        <position position="33"/>
    </location>
    <ligand>
        <name>FAD</name>
        <dbReference type="ChEBI" id="CHEBI:57692"/>
    </ligand>
</feature>
<feature type="binding site" evidence="1">
    <location>
        <position position="41"/>
    </location>
    <ligand>
        <name>FAD</name>
        <dbReference type="ChEBI" id="CHEBI:57692"/>
    </ligand>
</feature>
<feature type="binding site" evidence="1">
    <location>
        <position position="46"/>
    </location>
    <ligand>
        <name>FAD</name>
        <dbReference type="ChEBI" id="CHEBI:57692"/>
    </ligand>
</feature>
<feature type="binding site" evidence="1">
    <location>
        <position position="86"/>
    </location>
    <ligand>
        <name>FAD</name>
        <dbReference type="ChEBI" id="CHEBI:57692"/>
    </ligand>
</feature>
<feature type="binding site" evidence="1">
    <location>
        <position position="119"/>
    </location>
    <ligand>
        <name>FAD</name>
        <dbReference type="ChEBI" id="CHEBI:57692"/>
    </ligand>
</feature>
<feature type="binding site" evidence="1">
    <location>
        <position position="277"/>
    </location>
    <ligand>
        <name>FAD</name>
        <dbReference type="ChEBI" id="CHEBI:57692"/>
    </ligand>
</feature>
<feature type="binding site" evidence="1">
    <location>
        <position position="318"/>
    </location>
    <ligand>
        <name>FAD</name>
        <dbReference type="ChEBI" id="CHEBI:57692"/>
    </ligand>
</feature>
<gene>
    <name type="ordered locus">LL1647</name>
    <name type="ORF">L00196</name>
</gene>
<reference key="1">
    <citation type="journal article" date="2001" name="Genome Res.">
        <title>The complete genome sequence of the lactic acid bacterium Lactococcus lactis ssp. lactis IL1403.</title>
        <authorList>
            <person name="Bolotin A."/>
            <person name="Wincker P."/>
            <person name="Mauger S."/>
            <person name="Jaillon O."/>
            <person name="Malarme K."/>
            <person name="Weissenbach J."/>
            <person name="Ehrlich S.D."/>
            <person name="Sorokin A."/>
        </authorList>
    </citation>
    <scope>NUCLEOTIDE SEQUENCE [LARGE SCALE GENOMIC DNA]</scope>
    <source>
        <strain>IL1403</strain>
    </source>
</reference>
<evidence type="ECO:0000255" key="1">
    <source>
        <dbReference type="HAMAP-Rule" id="MF_01685"/>
    </source>
</evidence>
<keyword id="KW-0274">FAD</keyword>
<keyword id="KW-0285">Flavoprotein</keyword>
<keyword id="KW-0521">NADP</keyword>
<keyword id="KW-0560">Oxidoreductase</keyword>
<keyword id="KW-1185">Reference proteome</keyword>
<sequence length="321" mass="35100">MQELDLIIVGAGPVGLYAAFYAGMRGLSVAIIESAQVPGGQPQNLYPEKLIYDIAGLPAVTGADLTKNLLEQLAQISHRLFLGESVQKIEKEEGIFSVTTDKSTRRAKGVLLTTGAGLLKPRKLGIDNEETLANEGKISYFITSLKEFEGKNVAVFGGGDSALDWSLMLEKVAKNVHLVHRRTAFRGHEITVDRVMNSNVQVHTPYTFSNLIENELELKKIKSEESLNFSIDKILVNYGFLTNQVTLAENLEVSRNGRVKADSMMQSNIEGLYVAGDASDYPGKMPLMSVGFGEAVHAINAMTKKLEFDHPLRGGHSSSIF</sequence>
<organism>
    <name type="scientific">Lactococcus lactis subsp. lactis (strain IL1403)</name>
    <name type="common">Streptococcus lactis</name>
    <dbReference type="NCBI Taxonomy" id="272623"/>
    <lineage>
        <taxon>Bacteria</taxon>
        <taxon>Bacillati</taxon>
        <taxon>Bacillota</taxon>
        <taxon>Bacilli</taxon>
        <taxon>Lactobacillales</taxon>
        <taxon>Streptococcaceae</taxon>
        <taxon>Lactococcus</taxon>
    </lineage>
</organism>
<proteinExistence type="inferred from homology"/>
<name>FENR_LACLA</name>
<dbReference type="EC" id="1.18.1.2" evidence="1"/>
<dbReference type="EMBL" id="AE005176">
    <property type="protein sequence ID" value="AAK05745.1"/>
    <property type="molecule type" value="Genomic_DNA"/>
</dbReference>
<dbReference type="PIR" id="G86830">
    <property type="entry name" value="G86830"/>
</dbReference>
<dbReference type="RefSeq" id="NP_267803.1">
    <property type="nucleotide sequence ID" value="NC_002662.1"/>
</dbReference>
<dbReference type="RefSeq" id="WP_003129446.1">
    <property type="nucleotide sequence ID" value="NC_002662.1"/>
</dbReference>
<dbReference type="SMR" id="Q9CF34"/>
<dbReference type="PaxDb" id="272623-L00196"/>
<dbReference type="EnsemblBacteria" id="AAK05745">
    <property type="protein sequence ID" value="AAK05745"/>
    <property type="gene ID" value="L00196"/>
</dbReference>
<dbReference type="KEGG" id="lla:L00196"/>
<dbReference type="PATRIC" id="fig|272623.7.peg.1769"/>
<dbReference type="eggNOG" id="COG0492">
    <property type="taxonomic scope" value="Bacteria"/>
</dbReference>
<dbReference type="HOGENOM" id="CLU_031864_5_5_9"/>
<dbReference type="OrthoDB" id="9806179at2"/>
<dbReference type="Proteomes" id="UP000002196">
    <property type="component" value="Chromosome"/>
</dbReference>
<dbReference type="GO" id="GO:0004324">
    <property type="term" value="F:ferredoxin-NADP+ reductase activity"/>
    <property type="evidence" value="ECO:0007669"/>
    <property type="project" value="UniProtKB-UniRule"/>
</dbReference>
<dbReference type="GO" id="GO:0050660">
    <property type="term" value="F:flavin adenine dinucleotide binding"/>
    <property type="evidence" value="ECO:0007669"/>
    <property type="project" value="UniProtKB-UniRule"/>
</dbReference>
<dbReference type="GO" id="GO:0050661">
    <property type="term" value="F:NADP binding"/>
    <property type="evidence" value="ECO:0007669"/>
    <property type="project" value="UniProtKB-UniRule"/>
</dbReference>
<dbReference type="Gene3D" id="3.50.50.60">
    <property type="entry name" value="FAD/NAD(P)-binding domain"/>
    <property type="match status" value="2"/>
</dbReference>
<dbReference type="HAMAP" id="MF_01685">
    <property type="entry name" value="FENR2"/>
    <property type="match status" value="1"/>
</dbReference>
<dbReference type="InterPro" id="IPR036188">
    <property type="entry name" value="FAD/NAD-bd_sf"/>
</dbReference>
<dbReference type="InterPro" id="IPR023753">
    <property type="entry name" value="FAD/NAD-binding_dom"/>
</dbReference>
<dbReference type="InterPro" id="IPR022890">
    <property type="entry name" value="Fd--NADP_Rdtase_type_2"/>
</dbReference>
<dbReference type="InterPro" id="IPR050097">
    <property type="entry name" value="Ferredoxin-NADP_redctase_2"/>
</dbReference>
<dbReference type="PANTHER" id="PTHR48105">
    <property type="entry name" value="THIOREDOXIN REDUCTASE 1-RELATED-RELATED"/>
    <property type="match status" value="1"/>
</dbReference>
<dbReference type="Pfam" id="PF07992">
    <property type="entry name" value="Pyr_redox_2"/>
    <property type="match status" value="1"/>
</dbReference>
<dbReference type="PRINTS" id="PR00368">
    <property type="entry name" value="FADPNR"/>
</dbReference>
<dbReference type="PRINTS" id="PR00469">
    <property type="entry name" value="PNDRDTASEII"/>
</dbReference>
<dbReference type="SUPFAM" id="SSF51905">
    <property type="entry name" value="FAD/NAD(P)-binding domain"/>
    <property type="match status" value="1"/>
</dbReference>
<comment type="catalytic activity">
    <reaction evidence="1">
        <text>2 reduced [2Fe-2S]-[ferredoxin] + NADP(+) + H(+) = 2 oxidized [2Fe-2S]-[ferredoxin] + NADPH</text>
        <dbReference type="Rhea" id="RHEA:20125"/>
        <dbReference type="Rhea" id="RHEA-COMP:10000"/>
        <dbReference type="Rhea" id="RHEA-COMP:10001"/>
        <dbReference type="ChEBI" id="CHEBI:15378"/>
        <dbReference type="ChEBI" id="CHEBI:33737"/>
        <dbReference type="ChEBI" id="CHEBI:33738"/>
        <dbReference type="ChEBI" id="CHEBI:57783"/>
        <dbReference type="ChEBI" id="CHEBI:58349"/>
        <dbReference type="EC" id="1.18.1.2"/>
    </reaction>
</comment>
<comment type="cofactor">
    <cofactor evidence="1">
        <name>FAD</name>
        <dbReference type="ChEBI" id="CHEBI:57692"/>
    </cofactor>
    <text evidence="1">Binds 1 FAD per subunit.</text>
</comment>
<comment type="subunit">
    <text evidence="1">Homodimer.</text>
</comment>
<comment type="similarity">
    <text evidence="1">Belongs to the ferredoxin--NADP reductase type 2 family.</text>
</comment>
<accession>Q9CF34</accession>